<dbReference type="EMBL" id="BX950851">
    <property type="protein sequence ID" value="CAG74077.1"/>
    <property type="molecule type" value="Genomic_DNA"/>
</dbReference>
<dbReference type="SMR" id="Q6D808"/>
<dbReference type="STRING" id="218491.ECA1167"/>
<dbReference type="KEGG" id="eca:ECA1167"/>
<dbReference type="eggNOG" id="COG0257">
    <property type="taxonomic scope" value="Bacteria"/>
</dbReference>
<dbReference type="HOGENOM" id="CLU_135723_3_1_6"/>
<dbReference type="Proteomes" id="UP000007966">
    <property type="component" value="Chromosome"/>
</dbReference>
<dbReference type="GO" id="GO:1990904">
    <property type="term" value="C:ribonucleoprotein complex"/>
    <property type="evidence" value="ECO:0007669"/>
    <property type="project" value="UniProtKB-KW"/>
</dbReference>
<dbReference type="GO" id="GO:0005840">
    <property type="term" value="C:ribosome"/>
    <property type="evidence" value="ECO:0007669"/>
    <property type="project" value="UniProtKB-KW"/>
</dbReference>
<dbReference type="GO" id="GO:0003735">
    <property type="term" value="F:structural constituent of ribosome"/>
    <property type="evidence" value="ECO:0007669"/>
    <property type="project" value="InterPro"/>
</dbReference>
<dbReference type="GO" id="GO:0006412">
    <property type="term" value="P:translation"/>
    <property type="evidence" value="ECO:0007669"/>
    <property type="project" value="UniProtKB-UniRule"/>
</dbReference>
<dbReference type="HAMAP" id="MF_00251">
    <property type="entry name" value="Ribosomal_bL36"/>
    <property type="match status" value="1"/>
</dbReference>
<dbReference type="InterPro" id="IPR000473">
    <property type="entry name" value="Ribosomal_bL36"/>
</dbReference>
<dbReference type="InterPro" id="IPR035977">
    <property type="entry name" value="Ribosomal_bL36_sp"/>
</dbReference>
<dbReference type="InterPro" id="IPR047621">
    <property type="entry name" value="Ribosomal_L36_bact"/>
</dbReference>
<dbReference type="NCBIfam" id="NF002021">
    <property type="entry name" value="PRK00831.1"/>
    <property type="match status" value="1"/>
</dbReference>
<dbReference type="NCBIfam" id="TIGR01022">
    <property type="entry name" value="rpmJ_bact"/>
    <property type="match status" value="1"/>
</dbReference>
<dbReference type="PANTHER" id="PTHR47781">
    <property type="entry name" value="50S RIBOSOMAL PROTEIN L36 2"/>
    <property type="match status" value="1"/>
</dbReference>
<dbReference type="PANTHER" id="PTHR47781:SF1">
    <property type="entry name" value="LARGE RIBOSOMAL SUBUNIT PROTEIN BL36B"/>
    <property type="match status" value="1"/>
</dbReference>
<dbReference type="Pfam" id="PF00444">
    <property type="entry name" value="Ribosomal_L36"/>
    <property type="match status" value="1"/>
</dbReference>
<dbReference type="SUPFAM" id="SSF57840">
    <property type="entry name" value="Ribosomal protein L36"/>
    <property type="match status" value="1"/>
</dbReference>
<dbReference type="PROSITE" id="PS00828">
    <property type="entry name" value="RIBOSOMAL_L36"/>
    <property type="match status" value="1"/>
</dbReference>
<name>RL362_PECAS</name>
<sequence length="47" mass="5384">MQVLSSLRSAKNRHKDCIVVRRRGRVYVICKSNPRFKAVQGGKKKKG</sequence>
<accession>Q6D808</accession>
<organism>
    <name type="scientific">Pectobacterium atrosepticum (strain SCRI 1043 / ATCC BAA-672)</name>
    <name type="common">Erwinia carotovora subsp. atroseptica</name>
    <dbReference type="NCBI Taxonomy" id="218491"/>
    <lineage>
        <taxon>Bacteria</taxon>
        <taxon>Pseudomonadati</taxon>
        <taxon>Pseudomonadota</taxon>
        <taxon>Gammaproteobacteria</taxon>
        <taxon>Enterobacterales</taxon>
        <taxon>Pectobacteriaceae</taxon>
        <taxon>Pectobacterium</taxon>
    </lineage>
</organism>
<evidence type="ECO:0000255" key="1">
    <source>
        <dbReference type="HAMAP-Rule" id="MF_00251"/>
    </source>
</evidence>
<evidence type="ECO:0000305" key="2"/>
<protein>
    <recommendedName>
        <fullName evidence="1">Large ribosomal subunit protein bL36B</fullName>
    </recommendedName>
    <alternativeName>
        <fullName evidence="2">50S ribosomal protein L36 2</fullName>
    </alternativeName>
</protein>
<feature type="chain" id="PRO_0000126188" description="Large ribosomal subunit protein bL36B">
    <location>
        <begin position="1"/>
        <end position="47"/>
    </location>
</feature>
<comment type="similarity">
    <text evidence="1">Belongs to the bacterial ribosomal protein bL36 family.</text>
</comment>
<proteinExistence type="inferred from homology"/>
<reference key="1">
    <citation type="journal article" date="2004" name="Proc. Natl. Acad. Sci. U.S.A.">
        <title>Genome sequence of the enterobacterial phytopathogen Erwinia carotovora subsp. atroseptica and characterization of virulence factors.</title>
        <authorList>
            <person name="Bell K.S."/>
            <person name="Sebaihia M."/>
            <person name="Pritchard L."/>
            <person name="Holden M.T.G."/>
            <person name="Hyman L.J."/>
            <person name="Holeva M.C."/>
            <person name="Thomson N.R."/>
            <person name="Bentley S.D."/>
            <person name="Churcher L.J.C."/>
            <person name="Mungall K."/>
            <person name="Atkin R."/>
            <person name="Bason N."/>
            <person name="Brooks K."/>
            <person name="Chillingworth T."/>
            <person name="Clark K."/>
            <person name="Doggett J."/>
            <person name="Fraser A."/>
            <person name="Hance Z."/>
            <person name="Hauser H."/>
            <person name="Jagels K."/>
            <person name="Moule S."/>
            <person name="Norbertczak H."/>
            <person name="Ormond D."/>
            <person name="Price C."/>
            <person name="Quail M.A."/>
            <person name="Sanders M."/>
            <person name="Walker D."/>
            <person name="Whitehead S."/>
            <person name="Salmond G.P.C."/>
            <person name="Birch P.R.J."/>
            <person name="Parkhill J."/>
            <person name="Toth I.K."/>
        </authorList>
    </citation>
    <scope>NUCLEOTIDE SEQUENCE [LARGE SCALE GENOMIC DNA]</scope>
    <source>
        <strain>SCRI 1043 / ATCC BAA-672</strain>
    </source>
</reference>
<keyword id="KW-1185">Reference proteome</keyword>
<keyword id="KW-0687">Ribonucleoprotein</keyword>
<keyword id="KW-0689">Ribosomal protein</keyword>
<gene>
    <name evidence="1" type="primary">rpmJ2</name>
    <name type="ordered locus">ECA1167</name>
</gene>